<name>CIAO1_DROER</name>
<proteinExistence type="inferred from homology"/>
<protein>
    <recommendedName>
        <fullName evidence="1">Probable cytosolic iron-sulfur protein assembly protein Ciao1</fullName>
    </recommendedName>
</protein>
<keyword id="KW-0677">Repeat</keyword>
<keyword id="KW-0853">WD repeat</keyword>
<comment type="function">
    <text evidence="1">Essential component of the cytosolic iron-sulfur (Fe/S) protein assembly machinery. Required for the maturation of extramitochondrial Fe/S proteins.</text>
</comment>
<comment type="similarity">
    <text evidence="1">Belongs to the WD repeat CIA1 family.</text>
</comment>
<organism>
    <name type="scientific">Drosophila erecta</name>
    <name type="common">Fruit fly</name>
    <dbReference type="NCBI Taxonomy" id="7220"/>
    <lineage>
        <taxon>Eukaryota</taxon>
        <taxon>Metazoa</taxon>
        <taxon>Ecdysozoa</taxon>
        <taxon>Arthropoda</taxon>
        <taxon>Hexapoda</taxon>
        <taxon>Insecta</taxon>
        <taxon>Pterygota</taxon>
        <taxon>Neoptera</taxon>
        <taxon>Endopterygota</taxon>
        <taxon>Diptera</taxon>
        <taxon>Brachycera</taxon>
        <taxon>Muscomorpha</taxon>
        <taxon>Ephydroidea</taxon>
        <taxon>Drosophilidae</taxon>
        <taxon>Drosophila</taxon>
        <taxon>Sophophora</taxon>
    </lineage>
</organism>
<feature type="chain" id="PRO_0000382484" description="Probable cytosolic iron-sulfur protein assembly protein Ciao1">
    <location>
        <begin position="1"/>
        <end position="335"/>
    </location>
</feature>
<feature type="repeat" description="WD 1">
    <location>
        <begin position="12"/>
        <end position="51"/>
    </location>
</feature>
<feature type="repeat" description="WD 2">
    <location>
        <begin position="57"/>
        <end position="96"/>
    </location>
</feature>
<feature type="repeat" description="WD 3">
    <location>
        <begin position="101"/>
        <end position="140"/>
    </location>
</feature>
<feature type="repeat" description="WD 4">
    <location>
        <begin position="146"/>
        <end position="185"/>
    </location>
</feature>
<feature type="repeat" description="WD 5">
    <location>
        <begin position="192"/>
        <end position="231"/>
    </location>
</feature>
<feature type="repeat" description="WD 6">
    <location>
        <begin position="250"/>
        <end position="289"/>
    </location>
</feature>
<feature type="repeat" description="WD 7">
    <location>
        <begin position="301"/>
        <end position="335"/>
    </location>
</feature>
<sequence>MGRLILEHTLQGHKGRIWGVAWHPKGNVFASCGEDKAIRIWSLTGSTWSTKTILSDGHKRTIREIRWSPCGQYLASASFDATTAIWSKSSGEFECNATLEGHENEVKSVSWSRSGGLLATCSRDKSVWIWEVAGDDEFECAAVLNSHTQDVKRVVWHPTKEVLASASYDNTIKMYAEDPVDNDWDCTATLTSHTSTIWGIDFDADGERLVSCSDDTTIKIWKAYHPGNSAGVATPDQQTVWKCVCTLSGQHSRAIYDVSWCKLTGLIATACGDDGIRIFKETSDSKPDEPTFEQLTAEEGAHDQDVNSVQWNPVVAGQLISCSDDGTIKIWKVTE</sequence>
<reference key="1">
    <citation type="journal article" date="2007" name="Nature">
        <title>Evolution of genes and genomes on the Drosophila phylogeny.</title>
        <authorList>
            <consortium name="Drosophila 12 genomes consortium"/>
        </authorList>
    </citation>
    <scope>NUCLEOTIDE SEQUENCE [LARGE SCALE GENOMIC DNA]</scope>
    <source>
        <strain>Tucson 14021-0224.01</strain>
    </source>
</reference>
<evidence type="ECO:0000255" key="1">
    <source>
        <dbReference type="HAMAP-Rule" id="MF_03037"/>
    </source>
</evidence>
<accession>B3NQR5</accession>
<dbReference type="EMBL" id="CH954179">
    <property type="protein sequence ID" value="EDV55975.1"/>
    <property type="molecule type" value="Genomic_DNA"/>
</dbReference>
<dbReference type="SMR" id="B3NQR5"/>
<dbReference type="EnsemblMetazoa" id="FBtr0142445">
    <property type="protein sequence ID" value="FBpp0140937"/>
    <property type="gene ID" value="FBgn0114563"/>
</dbReference>
<dbReference type="EnsemblMetazoa" id="XM_001975539.3">
    <property type="protein sequence ID" value="XP_001975575.1"/>
    <property type="gene ID" value="LOC6549053"/>
</dbReference>
<dbReference type="GeneID" id="6549053"/>
<dbReference type="KEGG" id="der:6549053"/>
<dbReference type="CTD" id="9391"/>
<dbReference type="eggNOG" id="KOG0645">
    <property type="taxonomic scope" value="Eukaryota"/>
</dbReference>
<dbReference type="HOGENOM" id="CLU_000288_57_8_1"/>
<dbReference type="OMA" id="IREIRWS"/>
<dbReference type="OrthoDB" id="284782at2759"/>
<dbReference type="PhylomeDB" id="B3NQR5"/>
<dbReference type="Proteomes" id="UP000008711">
    <property type="component" value="Unassembled WGS sequence"/>
</dbReference>
<dbReference type="GO" id="GO:0097361">
    <property type="term" value="C:cytosolic [4Fe-4S] assembly targeting complex"/>
    <property type="evidence" value="ECO:0007669"/>
    <property type="project" value="EnsemblMetazoa"/>
</dbReference>
<dbReference type="GO" id="GO:1902695">
    <property type="term" value="C:metallochaperone complex"/>
    <property type="evidence" value="ECO:0007669"/>
    <property type="project" value="EnsemblMetazoa"/>
</dbReference>
<dbReference type="GO" id="GO:0016226">
    <property type="term" value="P:iron-sulfur cluster assembly"/>
    <property type="evidence" value="ECO:0007669"/>
    <property type="project" value="UniProtKB-UniRule"/>
</dbReference>
<dbReference type="GO" id="GO:0051604">
    <property type="term" value="P:protein maturation"/>
    <property type="evidence" value="ECO:0000250"/>
    <property type="project" value="UniProtKB"/>
</dbReference>
<dbReference type="CDD" id="cd00200">
    <property type="entry name" value="WD40"/>
    <property type="match status" value="1"/>
</dbReference>
<dbReference type="FunFam" id="2.130.10.10:FF:000136">
    <property type="entry name" value="Probable cytosolic iron-sulfur protein assembly protein CIAO1"/>
    <property type="match status" value="1"/>
</dbReference>
<dbReference type="Gene3D" id="2.130.10.10">
    <property type="entry name" value="YVTN repeat-like/Quinoprotein amine dehydrogenase"/>
    <property type="match status" value="1"/>
</dbReference>
<dbReference type="HAMAP" id="MF_03037">
    <property type="entry name" value="ciao1"/>
    <property type="match status" value="1"/>
</dbReference>
<dbReference type="InterPro" id="IPR028608">
    <property type="entry name" value="CIAO1/Cia1"/>
</dbReference>
<dbReference type="InterPro" id="IPR020472">
    <property type="entry name" value="G-protein_beta_WD-40_rep"/>
</dbReference>
<dbReference type="InterPro" id="IPR015943">
    <property type="entry name" value="WD40/YVTN_repeat-like_dom_sf"/>
</dbReference>
<dbReference type="InterPro" id="IPR019775">
    <property type="entry name" value="WD40_repeat_CS"/>
</dbReference>
<dbReference type="InterPro" id="IPR036322">
    <property type="entry name" value="WD40_repeat_dom_sf"/>
</dbReference>
<dbReference type="InterPro" id="IPR001680">
    <property type="entry name" value="WD40_rpt"/>
</dbReference>
<dbReference type="PANTHER" id="PTHR19920:SF0">
    <property type="entry name" value="CYTOSOLIC IRON-SULFUR PROTEIN ASSEMBLY PROTEIN CIAO1-RELATED"/>
    <property type="match status" value="1"/>
</dbReference>
<dbReference type="PANTHER" id="PTHR19920">
    <property type="entry name" value="WD40 PROTEIN CIAO1"/>
    <property type="match status" value="1"/>
</dbReference>
<dbReference type="Pfam" id="PF00400">
    <property type="entry name" value="WD40"/>
    <property type="match status" value="7"/>
</dbReference>
<dbReference type="PRINTS" id="PR00320">
    <property type="entry name" value="GPROTEINBRPT"/>
</dbReference>
<dbReference type="SMART" id="SM00320">
    <property type="entry name" value="WD40"/>
    <property type="match status" value="7"/>
</dbReference>
<dbReference type="SUPFAM" id="SSF50978">
    <property type="entry name" value="WD40 repeat-like"/>
    <property type="match status" value="1"/>
</dbReference>
<dbReference type="PROSITE" id="PS00678">
    <property type="entry name" value="WD_REPEATS_1"/>
    <property type="match status" value="1"/>
</dbReference>
<dbReference type="PROSITE" id="PS50082">
    <property type="entry name" value="WD_REPEATS_2"/>
    <property type="match status" value="6"/>
</dbReference>
<dbReference type="PROSITE" id="PS50294">
    <property type="entry name" value="WD_REPEATS_REGION"/>
    <property type="match status" value="1"/>
</dbReference>
<gene>
    <name evidence="1" type="primary">Ciao1</name>
    <name type="ORF">GG22391</name>
</gene>